<organism>
    <name type="scientific">Homo sapiens</name>
    <name type="common">Human</name>
    <dbReference type="NCBI Taxonomy" id="9606"/>
    <lineage>
        <taxon>Eukaryota</taxon>
        <taxon>Metazoa</taxon>
        <taxon>Chordata</taxon>
        <taxon>Craniata</taxon>
        <taxon>Vertebrata</taxon>
        <taxon>Euteleostomi</taxon>
        <taxon>Mammalia</taxon>
        <taxon>Eutheria</taxon>
        <taxon>Euarchontoglires</taxon>
        <taxon>Primates</taxon>
        <taxon>Haplorrhini</taxon>
        <taxon>Catarrhini</taxon>
        <taxon>Hominidae</taxon>
        <taxon>Homo</taxon>
    </lineage>
</organism>
<dbReference type="EMBL" id="AK298753">
    <property type="protein sequence ID" value="BAG60895.1"/>
    <property type="molecule type" value="mRNA"/>
</dbReference>
<dbReference type="EMBL" id="AC006477">
    <property type="status" value="NOT_ANNOTATED_CDS"/>
    <property type="molecule type" value="Genomic_DNA"/>
</dbReference>
<dbReference type="EMBL" id="AC105052">
    <property type="status" value="NOT_ANNOTATED_CDS"/>
    <property type="molecule type" value="Genomic_DNA"/>
</dbReference>
<dbReference type="EMBL" id="BC029175">
    <property type="protein sequence ID" value="AAH29175.1"/>
    <property type="molecule type" value="mRNA"/>
</dbReference>
<dbReference type="CCDS" id="CCDS47676.1">
    <molecule id="Q8N0U4-1"/>
</dbReference>
<dbReference type="CCDS" id="CCDS47677.1">
    <molecule id="Q8N0U4-3"/>
</dbReference>
<dbReference type="RefSeq" id="NP_001138740.2">
    <molecule id="Q8N0U4-1"/>
    <property type="nucleotide sequence ID" value="NM_001145268.2"/>
</dbReference>
<dbReference type="RefSeq" id="NP_001138741.2">
    <molecule id="Q8N0U4-3"/>
    <property type="nucleotide sequence ID" value="NM_001145269.2"/>
</dbReference>
<dbReference type="SMR" id="Q8N0U4"/>
<dbReference type="BioGRID" id="128791">
    <property type="interactions" value="10"/>
</dbReference>
<dbReference type="FunCoup" id="Q8N0U4">
    <property type="interactions" value="263"/>
</dbReference>
<dbReference type="IntAct" id="Q8N0U4">
    <property type="interactions" value="5"/>
</dbReference>
<dbReference type="STRING" id="9606.ENSP00000395340"/>
<dbReference type="GlyGen" id="Q8N0U4">
    <property type="glycosylation" value="1 site, 1 O-linked glycan (1 site)"/>
</dbReference>
<dbReference type="iPTMnet" id="Q8N0U4"/>
<dbReference type="PhosphoSitePlus" id="Q8N0U4"/>
<dbReference type="SwissPalm" id="Q8N0U4"/>
<dbReference type="BioMuta" id="FAM185A"/>
<dbReference type="DMDM" id="296439356"/>
<dbReference type="jPOST" id="Q8N0U4"/>
<dbReference type="MassIVE" id="Q8N0U4"/>
<dbReference type="PaxDb" id="9606-ENSP00000395340"/>
<dbReference type="PeptideAtlas" id="Q8N0U4"/>
<dbReference type="ProteomicsDB" id="71456">
    <molecule id="Q8N0U4-1"/>
</dbReference>
<dbReference type="ProteomicsDB" id="71457">
    <molecule id="Q8N0U4-2"/>
</dbReference>
<dbReference type="ProteomicsDB" id="71458">
    <molecule id="Q8N0U4-3"/>
</dbReference>
<dbReference type="Pumba" id="Q8N0U4"/>
<dbReference type="Antibodypedia" id="31132">
    <property type="antibodies" value="40 antibodies from 16 providers"/>
</dbReference>
<dbReference type="DNASU" id="222234"/>
<dbReference type="Ensembl" id="ENST00000409231.7">
    <molecule id="Q8N0U4-3"/>
    <property type="protein sequence ID" value="ENSP00000387066.3"/>
    <property type="gene ID" value="ENSG00000222011.9"/>
</dbReference>
<dbReference type="Ensembl" id="ENST00000413034.3">
    <molecule id="Q8N0U4-1"/>
    <property type="protein sequence ID" value="ENSP00000395340.2"/>
    <property type="gene ID" value="ENSG00000222011.9"/>
</dbReference>
<dbReference type="Ensembl" id="ENST00000442873.5">
    <molecule id="Q8N0U4-2"/>
    <property type="protein sequence ID" value="ENSP00000410226.1"/>
    <property type="gene ID" value="ENSG00000222011.9"/>
</dbReference>
<dbReference type="GeneID" id="222234"/>
<dbReference type="KEGG" id="hsa:222234"/>
<dbReference type="MANE-Select" id="ENST00000413034.3">
    <property type="protein sequence ID" value="ENSP00000395340.2"/>
    <property type="RefSeq nucleotide sequence ID" value="NM_001145268.2"/>
    <property type="RefSeq protein sequence ID" value="NP_001138740.2"/>
</dbReference>
<dbReference type="UCSC" id="uc011klf.3">
    <molecule id="Q8N0U4-1"/>
    <property type="organism name" value="human"/>
</dbReference>
<dbReference type="AGR" id="HGNC:22412"/>
<dbReference type="CTD" id="222234"/>
<dbReference type="DisGeNET" id="222234"/>
<dbReference type="GeneCards" id="FAM185A"/>
<dbReference type="HGNC" id="HGNC:22412">
    <property type="gene designation" value="FAM185A"/>
</dbReference>
<dbReference type="HPA" id="ENSG00000222011">
    <property type="expression patterns" value="Low tissue specificity"/>
</dbReference>
<dbReference type="neXtProt" id="NX_Q8N0U4"/>
<dbReference type="OpenTargets" id="ENSG00000222011"/>
<dbReference type="PharmGKB" id="PA164719851"/>
<dbReference type="VEuPathDB" id="HostDB:ENSG00000222011"/>
<dbReference type="eggNOG" id="ENOG502QQG7">
    <property type="taxonomic scope" value="Eukaryota"/>
</dbReference>
<dbReference type="GeneTree" id="ENSGT00390000016680"/>
<dbReference type="HOGENOM" id="CLU_150388_0_0_1"/>
<dbReference type="InParanoid" id="Q8N0U4"/>
<dbReference type="OMA" id="KTQSWFE"/>
<dbReference type="OrthoDB" id="5984441at2759"/>
<dbReference type="PAN-GO" id="Q8N0U4">
    <property type="GO annotations" value="0 GO annotations based on evolutionary models"/>
</dbReference>
<dbReference type="PhylomeDB" id="Q8N0U4"/>
<dbReference type="TreeFam" id="TF323809"/>
<dbReference type="PathwayCommons" id="Q8N0U4"/>
<dbReference type="SignaLink" id="Q8N0U4"/>
<dbReference type="BioGRID-ORCS" id="222234">
    <property type="hits" value="31 hits in 1123 CRISPR screens"/>
</dbReference>
<dbReference type="ChiTaRS" id="FAM185A">
    <property type="organism name" value="human"/>
</dbReference>
<dbReference type="GenomeRNAi" id="222234"/>
<dbReference type="Pharos" id="Q8N0U4">
    <property type="development level" value="Tdark"/>
</dbReference>
<dbReference type="PRO" id="PR:Q8N0U4"/>
<dbReference type="Proteomes" id="UP000005640">
    <property type="component" value="Chromosome 7"/>
</dbReference>
<dbReference type="RNAct" id="Q8N0U4">
    <property type="molecule type" value="protein"/>
</dbReference>
<dbReference type="Bgee" id="ENSG00000222011">
    <property type="expression patterns" value="Expressed in quadriceps femoris and 109 other cell types or tissues"/>
</dbReference>
<dbReference type="ExpressionAtlas" id="Q8N0U4">
    <property type="expression patterns" value="baseline and differential"/>
</dbReference>
<dbReference type="GO" id="GO:0005739">
    <property type="term" value="C:mitochondrion"/>
    <property type="evidence" value="ECO:0006056"/>
    <property type="project" value="FlyBase"/>
</dbReference>
<dbReference type="FunFam" id="2.160.20.120:FF:000001">
    <property type="entry name" value="Protein FAM185A"/>
    <property type="match status" value="1"/>
</dbReference>
<dbReference type="Gene3D" id="2.160.20.120">
    <property type="match status" value="1"/>
</dbReference>
<dbReference type="InterPro" id="IPR025164">
    <property type="entry name" value="Toastrack_DUF4097"/>
</dbReference>
<dbReference type="PANTHER" id="PTHR34094">
    <property type="match status" value="1"/>
</dbReference>
<dbReference type="PANTHER" id="PTHR34094:SF1">
    <property type="entry name" value="PROTEIN FAM185A"/>
    <property type="match status" value="1"/>
</dbReference>
<dbReference type="Pfam" id="PF13349">
    <property type="entry name" value="DUF4097"/>
    <property type="match status" value="1"/>
</dbReference>
<protein>
    <recommendedName>
        <fullName>Protein FAM185A</fullName>
    </recommendedName>
</protein>
<accession>Q8N0U4</accession>
<accession>A8MUR7</accession>
<accession>B4DQD3</accession>
<accession>C9IZ91</accession>
<gene>
    <name type="primary">FAM185A</name>
</gene>
<comment type="interaction">
    <interactant intactId="EBI-12842420">
        <id>Q8N0U4</id>
    </interactant>
    <interactant intactId="EBI-740220">
        <id>O14964</id>
        <label>HGS</label>
    </interactant>
    <organismsDiffer>false</organismsDiffer>
    <experiments>3</experiments>
</comment>
<comment type="alternative products">
    <event type="alternative splicing"/>
    <isoform>
        <id>Q8N0U4-1</id>
        <name>1</name>
        <sequence type="displayed"/>
    </isoform>
    <isoform>
        <id>Q8N0U4-2</id>
        <name>2</name>
        <sequence type="described" ref="VSP_031804"/>
    </isoform>
    <isoform>
        <id>Q8N0U4-3</id>
        <name>3</name>
        <sequence type="described" ref="VSP_037078"/>
    </isoform>
</comment>
<comment type="miscellaneous">
    <molecule>Isoform 2</molecule>
    <text evidence="7">May be produced at very low levels due to a premature stop codon in the mRNA, leading to nonsense-mediated mRNA decay.</text>
</comment>
<proteinExistence type="evidence at protein level"/>
<name>F185A_HUMAN</name>
<feature type="chain" id="PRO_0000321830" description="Protein FAM185A">
    <location>
        <begin position="1"/>
        <end position="392"/>
    </location>
</feature>
<feature type="region of interest" description="Disordered" evidence="1">
    <location>
        <begin position="39"/>
        <end position="60"/>
    </location>
</feature>
<feature type="splice variant" id="VSP_037078" description="In isoform 3." evidence="5">
    <location>
        <begin position="71"/>
        <end position="187"/>
    </location>
</feature>
<feature type="splice variant" id="VSP_031804" description="In isoform 2." evidence="6">
    <location>
        <begin position="145"/>
        <end position="392"/>
    </location>
</feature>
<feature type="sequence variant" id="VAR_084592" description="In dbSNP:rs141352868." evidence="4">
    <original>L</original>
    <variation>F</variation>
    <location>
        <position position="15"/>
    </location>
</feature>
<feature type="sequence variant" id="VAR_039356" description="In dbSNP:rs28695887." evidence="2 3">
    <original>G</original>
    <variation>A</variation>
    <location>
        <position position="60"/>
    </location>
</feature>
<reference key="1">
    <citation type="journal article" date="2004" name="Nat. Genet.">
        <title>Complete sequencing and characterization of 21,243 full-length human cDNAs.</title>
        <authorList>
            <person name="Ota T."/>
            <person name="Suzuki Y."/>
            <person name="Nishikawa T."/>
            <person name="Otsuki T."/>
            <person name="Sugiyama T."/>
            <person name="Irie R."/>
            <person name="Wakamatsu A."/>
            <person name="Hayashi K."/>
            <person name="Sato H."/>
            <person name="Nagai K."/>
            <person name="Kimura K."/>
            <person name="Makita H."/>
            <person name="Sekine M."/>
            <person name="Obayashi M."/>
            <person name="Nishi T."/>
            <person name="Shibahara T."/>
            <person name="Tanaka T."/>
            <person name="Ishii S."/>
            <person name="Yamamoto J."/>
            <person name="Saito K."/>
            <person name="Kawai Y."/>
            <person name="Isono Y."/>
            <person name="Nakamura Y."/>
            <person name="Nagahari K."/>
            <person name="Murakami K."/>
            <person name="Yasuda T."/>
            <person name="Iwayanagi T."/>
            <person name="Wagatsuma M."/>
            <person name="Shiratori A."/>
            <person name="Sudo H."/>
            <person name="Hosoiri T."/>
            <person name="Kaku Y."/>
            <person name="Kodaira H."/>
            <person name="Kondo H."/>
            <person name="Sugawara M."/>
            <person name="Takahashi M."/>
            <person name="Kanda K."/>
            <person name="Yokoi T."/>
            <person name="Furuya T."/>
            <person name="Kikkawa E."/>
            <person name="Omura Y."/>
            <person name="Abe K."/>
            <person name="Kamihara K."/>
            <person name="Katsuta N."/>
            <person name="Sato K."/>
            <person name="Tanikawa M."/>
            <person name="Yamazaki M."/>
            <person name="Ninomiya K."/>
            <person name="Ishibashi T."/>
            <person name="Yamashita H."/>
            <person name="Murakawa K."/>
            <person name="Fujimori K."/>
            <person name="Tanai H."/>
            <person name="Kimata M."/>
            <person name="Watanabe M."/>
            <person name="Hiraoka S."/>
            <person name="Chiba Y."/>
            <person name="Ishida S."/>
            <person name="Ono Y."/>
            <person name="Takiguchi S."/>
            <person name="Watanabe S."/>
            <person name="Yosida M."/>
            <person name="Hotuta T."/>
            <person name="Kusano J."/>
            <person name="Kanehori K."/>
            <person name="Takahashi-Fujii A."/>
            <person name="Hara H."/>
            <person name="Tanase T.-O."/>
            <person name="Nomura Y."/>
            <person name="Togiya S."/>
            <person name="Komai F."/>
            <person name="Hara R."/>
            <person name="Takeuchi K."/>
            <person name="Arita M."/>
            <person name="Imose N."/>
            <person name="Musashino K."/>
            <person name="Yuuki H."/>
            <person name="Oshima A."/>
            <person name="Sasaki N."/>
            <person name="Aotsuka S."/>
            <person name="Yoshikawa Y."/>
            <person name="Matsunawa H."/>
            <person name="Ichihara T."/>
            <person name="Shiohata N."/>
            <person name="Sano S."/>
            <person name="Moriya S."/>
            <person name="Momiyama H."/>
            <person name="Satoh N."/>
            <person name="Takami S."/>
            <person name="Terashima Y."/>
            <person name="Suzuki O."/>
            <person name="Nakagawa S."/>
            <person name="Senoh A."/>
            <person name="Mizoguchi H."/>
            <person name="Goto Y."/>
            <person name="Shimizu F."/>
            <person name="Wakebe H."/>
            <person name="Hishigaki H."/>
            <person name="Watanabe T."/>
            <person name="Sugiyama A."/>
            <person name="Takemoto M."/>
            <person name="Kawakami B."/>
            <person name="Yamazaki M."/>
            <person name="Watanabe K."/>
            <person name="Kumagai A."/>
            <person name="Itakura S."/>
            <person name="Fukuzumi Y."/>
            <person name="Fujimori Y."/>
            <person name="Komiyama M."/>
            <person name="Tashiro H."/>
            <person name="Tanigami A."/>
            <person name="Fujiwara T."/>
            <person name="Ono T."/>
            <person name="Yamada K."/>
            <person name="Fujii Y."/>
            <person name="Ozaki K."/>
            <person name="Hirao M."/>
            <person name="Ohmori Y."/>
            <person name="Kawabata A."/>
            <person name="Hikiji T."/>
            <person name="Kobatake N."/>
            <person name="Inagaki H."/>
            <person name="Ikema Y."/>
            <person name="Okamoto S."/>
            <person name="Okitani R."/>
            <person name="Kawakami T."/>
            <person name="Noguchi S."/>
            <person name="Itoh T."/>
            <person name="Shigeta K."/>
            <person name="Senba T."/>
            <person name="Matsumura K."/>
            <person name="Nakajima Y."/>
            <person name="Mizuno T."/>
            <person name="Morinaga M."/>
            <person name="Sasaki M."/>
            <person name="Togashi T."/>
            <person name="Oyama M."/>
            <person name="Hata H."/>
            <person name="Watanabe M."/>
            <person name="Komatsu T."/>
            <person name="Mizushima-Sugano J."/>
            <person name="Satoh T."/>
            <person name="Shirai Y."/>
            <person name="Takahashi Y."/>
            <person name="Nakagawa K."/>
            <person name="Okumura K."/>
            <person name="Nagase T."/>
            <person name="Nomura N."/>
            <person name="Kikuchi H."/>
            <person name="Masuho Y."/>
            <person name="Yamashita R."/>
            <person name="Nakai K."/>
            <person name="Yada T."/>
            <person name="Nakamura Y."/>
            <person name="Ohara O."/>
            <person name="Isogai T."/>
            <person name="Sugano S."/>
        </authorList>
    </citation>
    <scope>NUCLEOTIDE SEQUENCE [LARGE SCALE MRNA] (ISOFORM 3)</scope>
    <scope>VARIANT ALA-60</scope>
    <source>
        <tissue>Ovary</tissue>
    </source>
</reference>
<reference key="2">
    <citation type="journal article" date="2003" name="Nature">
        <title>The DNA sequence of human chromosome 7.</title>
        <authorList>
            <person name="Hillier L.W."/>
            <person name="Fulton R.S."/>
            <person name="Fulton L.A."/>
            <person name="Graves T.A."/>
            <person name="Pepin K.H."/>
            <person name="Wagner-McPherson C."/>
            <person name="Layman D."/>
            <person name="Maas J."/>
            <person name="Jaeger S."/>
            <person name="Walker R."/>
            <person name="Wylie K."/>
            <person name="Sekhon M."/>
            <person name="Becker M.C."/>
            <person name="O'Laughlin M.D."/>
            <person name="Schaller M.E."/>
            <person name="Fewell G.A."/>
            <person name="Delehaunty K.D."/>
            <person name="Miner T.L."/>
            <person name="Nash W.E."/>
            <person name="Cordes M."/>
            <person name="Du H."/>
            <person name="Sun H."/>
            <person name="Edwards J."/>
            <person name="Bradshaw-Cordum H."/>
            <person name="Ali J."/>
            <person name="Andrews S."/>
            <person name="Isak A."/>
            <person name="Vanbrunt A."/>
            <person name="Nguyen C."/>
            <person name="Du F."/>
            <person name="Lamar B."/>
            <person name="Courtney L."/>
            <person name="Kalicki J."/>
            <person name="Ozersky P."/>
            <person name="Bielicki L."/>
            <person name="Scott K."/>
            <person name="Holmes A."/>
            <person name="Harkins R."/>
            <person name="Harris A."/>
            <person name="Strong C.M."/>
            <person name="Hou S."/>
            <person name="Tomlinson C."/>
            <person name="Dauphin-Kohlberg S."/>
            <person name="Kozlowicz-Reilly A."/>
            <person name="Leonard S."/>
            <person name="Rohlfing T."/>
            <person name="Rock S.M."/>
            <person name="Tin-Wollam A.-M."/>
            <person name="Abbott A."/>
            <person name="Minx P."/>
            <person name="Maupin R."/>
            <person name="Strowmatt C."/>
            <person name="Latreille P."/>
            <person name="Miller N."/>
            <person name="Johnson D."/>
            <person name="Murray J."/>
            <person name="Woessner J.P."/>
            <person name="Wendl M.C."/>
            <person name="Yang S.-P."/>
            <person name="Schultz B.R."/>
            <person name="Wallis J.W."/>
            <person name="Spieth J."/>
            <person name="Bieri T.A."/>
            <person name="Nelson J.O."/>
            <person name="Berkowicz N."/>
            <person name="Wohldmann P.E."/>
            <person name="Cook L.L."/>
            <person name="Hickenbotham M.T."/>
            <person name="Eldred J."/>
            <person name="Williams D."/>
            <person name="Bedell J.A."/>
            <person name="Mardis E.R."/>
            <person name="Clifton S.W."/>
            <person name="Chissoe S.L."/>
            <person name="Marra M.A."/>
            <person name="Raymond C."/>
            <person name="Haugen E."/>
            <person name="Gillett W."/>
            <person name="Zhou Y."/>
            <person name="James R."/>
            <person name="Phelps K."/>
            <person name="Iadanoto S."/>
            <person name="Bubb K."/>
            <person name="Simms E."/>
            <person name="Levy R."/>
            <person name="Clendenning J."/>
            <person name="Kaul R."/>
            <person name="Kent W.J."/>
            <person name="Furey T.S."/>
            <person name="Baertsch R.A."/>
            <person name="Brent M.R."/>
            <person name="Keibler E."/>
            <person name="Flicek P."/>
            <person name="Bork P."/>
            <person name="Suyama M."/>
            <person name="Bailey J.A."/>
            <person name="Portnoy M.E."/>
            <person name="Torrents D."/>
            <person name="Chinwalla A.T."/>
            <person name="Gish W.R."/>
            <person name="Eddy S.R."/>
            <person name="McPherson J.D."/>
            <person name="Olson M.V."/>
            <person name="Eichler E.E."/>
            <person name="Green E.D."/>
            <person name="Waterston R.H."/>
            <person name="Wilson R.K."/>
        </authorList>
    </citation>
    <scope>NUCLEOTIDE SEQUENCE [LARGE SCALE GENOMIC DNA]</scope>
</reference>
<reference key="3">
    <citation type="journal article" date="2004" name="Genome Res.">
        <title>The status, quality, and expansion of the NIH full-length cDNA project: the Mammalian Gene Collection (MGC).</title>
        <authorList>
            <consortium name="The MGC Project Team"/>
        </authorList>
    </citation>
    <scope>NUCLEOTIDE SEQUENCE [LARGE SCALE MRNA] (ISOFORM 2)</scope>
    <scope>VARIANT ALA-60</scope>
    <source>
        <tissue>Brain</tissue>
    </source>
</reference>
<reference key="4">
    <citation type="journal article" date="2017" name="Clin. Immunol.">
        <title>Genetic modifiers of multiple sclerosis progression, severity and onset.</title>
        <authorList>
            <person name="Sadovnick A.D."/>
            <person name="Traboulsee A.L."/>
            <person name="Zhao Y."/>
            <person name="Bernales C.Q."/>
            <person name="Encarnacion M."/>
            <person name="Ross J.P."/>
            <person name="Yee I.M."/>
            <person name="Criscuoli M.G."/>
            <person name="Vilarino-Gueell C."/>
        </authorList>
    </citation>
    <scope>VARIANT PHE-15</scope>
</reference>
<keyword id="KW-0025">Alternative splicing</keyword>
<keyword id="KW-1267">Proteomics identification</keyword>
<keyword id="KW-1185">Reference proteome</keyword>
<sequence>MLAPCSGWELGCFRLCLRQVRLWAGAGRWACWACQARPYSSGGSERWPGSETEVPPPGPGRRTLKEWTLQVSPFGRLRARLPCHLAVRPLDPLTYPDGDRVLVAVCGVEGGVRGLDGLQVKYDEDLEEMAIVSDTIHPQASVEVNAPLKFGLDIKSSGSGCVKVQSIEGDNCKIETEHGTSILQSVKGQKLHVQTKGGKVICLGTVYGNIDIHASDKSAVTIDKLQGSSVTVSTEDGLLKAKYLYTESSFLSSAAGDITLGSVHGNITLQSKMGNITVDSSSGCLKASTNQGAIDVYVSQLGKVELKSHKGSIIVKVPSSLQAHLQLSGKEVDVNSEVHVQEMAEVRKDDVVTVTGLMNQASKREKWIKADAPKGTVSFRRQSWFQSLKLQD</sequence>
<evidence type="ECO:0000256" key="1">
    <source>
        <dbReference type="SAM" id="MobiDB-lite"/>
    </source>
</evidence>
<evidence type="ECO:0000269" key="2">
    <source>
    </source>
</evidence>
<evidence type="ECO:0000269" key="3">
    <source>
    </source>
</evidence>
<evidence type="ECO:0000269" key="4">
    <source>
    </source>
</evidence>
<evidence type="ECO:0000303" key="5">
    <source>
    </source>
</evidence>
<evidence type="ECO:0000303" key="6">
    <source>
    </source>
</evidence>
<evidence type="ECO:0000305" key="7"/>